<keyword id="KW-0028">Amino-acid biosynthesis</keyword>
<keyword id="KW-0055">Arginine biosynthesis</keyword>
<keyword id="KW-0963">Cytoplasm</keyword>
<keyword id="KW-0521">NADP</keyword>
<keyword id="KW-0560">Oxidoreductase</keyword>
<keyword id="KW-1185">Reference proteome</keyword>
<gene>
    <name evidence="1" type="primary">argC</name>
    <name type="ordered locus">CCNA_01442</name>
</gene>
<protein>
    <recommendedName>
        <fullName evidence="1">N-acetyl-gamma-glutamyl-phosphate reductase</fullName>
        <shortName evidence="1">AGPR</shortName>
        <ecNumber evidence="1">1.2.1.38</ecNumber>
    </recommendedName>
    <alternativeName>
        <fullName evidence="1">N-acetyl-glutamate semialdehyde dehydrogenase</fullName>
        <shortName evidence="1">NAGSA dehydrogenase</shortName>
    </alternativeName>
</protein>
<comment type="function">
    <text evidence="1">Catalyzes the NADPH-dependent reduction of N-acetyl-5-glutamyl phosphate to yield N-acetyl-L-glutamate 5-semialdehyde.</text>
</comment>
<comment type="catalytic activity">
    <reaction evidence="1">
        <text>N-acetyl-L-glutamate 5-semialdehyde + phosphate + NADP(+) = N-acetyl-L-glutamyl 5-phosphate + NADPH + H(+)</text>
        <dbReference type="Rhea" id="RHEA:21588"/>
        <dbReference type="ChEBI" id="CHEBI:15378"/>
        <dbReference type="ChEBI" id="CHEBI:29123"/>
        <dbReference type="ChEBI" id="CHEBI:43474"/>
        <dbReference type="ChEBI" id="CHEBI:57783"/>
        <dbReference type="ChEBI" id="CHEBI:57936"/>
        <dbReference type="ChEBI" id="CHEBI:58349"/>
        <dbReference type="EC" id="1.2.1.38"/>
    </reaction>
</comment>
<comment type="pathway">
    <text evidence="1">Amino-acid biosynthesis; L-arginine biosynthesis; N(2)-acetyl-L-ornithine from L-glutamate: step 3/4.</text>
</comment>
<comment type="subcellular location">
    <subcellularLocation>
        <location evidence="1">Cytoplasm</location>
    </subcellularLocation>
</comment>
<comment type="similarity">
    <text evidence="1">Belongs to the NAGSA dehydrogenase family. Type 2 subfamily.</text>
</comment>
<sequence>MANAPKVFIDGEAGTTGLQIRERLVGRTDLQLISIDPDKRKDADARAEMLNSADAVILCLPDDAAKEAVSLVSNPNTVIIDASTAYRTAEGWAYGFAELDSEQRGKIAASKRISNPGCYPTGAIALTRPLVSAGILPAELPVSYNAVSGYTGGGKAMIAQFEDESAADHTRAPYFIYGLSLSHKHVPEMQKHGGLLTRPIFTPAVGRYAQGMIVEMPLHLSTLNGAPSLADIHAALVKHYKGEAFVEVASLDEAKALTTLDPEGLNGTNRLKLFVFGSDAGGQARLVALLDNLGKGASGAAVQNLNIALGLDEAAGL</sequence>
<evidence type="ECO:0000255" key="1">
    <source>
        <dbReference type="HAMAP-Rule" id="MF_01110"/>
    </source>
</evidence>
<accession>B8H555</accession>
<feature type="chain" id="PRO_1000163994" description="N-acetyl-gamma-glutamyl-phosphate reductase">
    <location>
        <begin position="1"/>
        <end position="317"/>
    </location>
</feature>
<feature type="active site" evidence="1">
    <location>
        <position position="118"/>
    </location>
</feature>
<reference key="1">
    <citation type="journal article" date="2010" name="J. Bacteriol.">
        <title>The genetic basis of laboratory adaptation in Caulobacter crescentus.</title>
        <authorList>
            <person name="Marks M.E."/>
            <person name="Castro-Rojas C.M."/>
            <person name="Teiling C."/>
            <person name="Du L."/>
            <person name="Kapatral V."/>
            <person name="Walunas T.L."/>
            <person name="Crosson S."/>
        </authorList>
    </citation>
    <scope>NUCLEOTIDE SEQUENCE [LARGE SCALE GENOMIC DNA]</scope>
    <source>
        <strain>NA1000 / CB15N</strain>
    </source>
</reference>
<organism>
    <name type="scientific">Caulobacter vibrioides (strain NA1000 / CB15N)</name>
    <name type="common">Caulobacter crescentus</name>
    <dbReference type="NCBI Taxonomy" id="565050"/>
    <lineage>
        <taxon>Bacteria</taxon>
        <taxon>Pseudomonadati</taxon>
        <taxon>Pseudomonadota</taxon>
        <taxon>Alphaproteobacteria</taxon>
        <taxon>Caulobacterales</taxon>
        <taxon>Caulobacteraceae</taxon>
        <taxon>Caulobacter</taxon>
    </lineage>
</organism>
<proteinExistence type="inferred from homology"/>
<name>ARGC_CAUVN</name>
<dbReference type="EC" id="1.2.1.38" evidence="1"/>
<dbReference type="EMBL" id="CP001340">
    <property type="protein sequence ID" value="ACL94907.1"/>
    <property type="molecule type" value="Genomic_DNA"/>
</dbReference>
<dbReference type="RefSeq" id="WP_010919254.1">
    <property type="nucleotide sequence ID" value="NC_011916.1"/>
</dbReference>
<dbReference type="RefSeq" id="YP_002516815.1">
    <property type="nucleotide sequence ID" value="NC_011916.1"/>
</dbReference>
<dbReference type="SMR" id="B8H555"/>
<dbReference type="GeneID" id="7330172"/>
<dbReference type="KEGG" id="ccs:CCNA_01442"/>
<dbReference type="PATRIC" id="fig|565050.3.peg.1426"/>
<dbReference type="HOGENOM" id="CLU_077118_0_0_5"/>
<dbReference type="OrthoDB" id="9801289at2"/>
<dbReference type="PhylomeDB" id="B8H555"/>
<dbReference type="UniPathway" id="UPA00068">
    <property type="reaction ID" value="UER00108"/>
</dbReference>
<dbReference type="Proteomes" id="UP000001364">
    <property type="component" value="Chromosome"/>
</dbReference>
<dbReference type="GO" id="GO:0005737">
    <property type="term" value="C:cytoplasm"/>
    <property type="evidence" value="ECO:0007669"/>
    <property type="project" value="UniProtKB-SubCell"/>
</dbReference>
<dbReference type="GO" id="GO:0003942">
    <property type="term" value="F:N-acetyl-gamma-glutamyl-phosphate reductase activity"/>
    <property type="evidence" value="ECO:0007669"/>
    <property type="project" value="UniProtKB-UniRule"/>
</dbReference>
<dbReference type="GO" id="GO:0051287">
    <property type="term" value="F:NAD binding"/>
    <property type="evidence" value="ECO:0007669"/>
    <property type="project" value="InterPro"/>
</dbReference>
<dbReference type="GO" id="GO:0006526">
    <property type="term" value="P:L-arginine biosynthetic process"/>
    <property type="evidence" value="ECO:0007669"/>
    <property type="project" value="UniProtKB-UniRule"/>
</dbReference>
<dbReference type="CDD" id="cd23935">
    <property type="entry name" value="AGPR_2_C"/>
    <property type="match status" value="1"/>
</dbReference>
<dbReference type="CDD" id="cd17896">
    <property type="entry name" value="AGPR_2_N"/>
    <property type="match status" value="1"/>
</dbReference>
<dbReference type="Gene3D" id="3.30.360.10">
    <property type="entry name" value="Dihydrodipicolinate Reductase, domain 2"/>
    <property type="match status" value="1"/>
</dbReference>
<dbReference type="Gene3D" id="3.40.50.720">
    <property type="entry name" value="NAD(P)-binding Rossmann-like Domain"/>
    <property type="match status" value="1"/>
</dbReference>
<dbReference type="HAMAP" id="MF_01110">
    <property type="entry name" value="ArgC_type2"/>
    <property type="match status" value="1"/>
</dbReference>
<dbReference type="InterPro" id="IPR010136">
    <property type="entry name" value="AGPR_type-2"/>
</dbReference>
<dbReference type="InterPro" id="IPR036291">
    <property type="entry name" value="NAD(P)-bd_dom_sf"/>
</dbReference>
<dbReference type="InterPro" id="IPR050085">
    <property type="entry name" value="NAGSA_dehydrogenase"/>
</dbReference>
<dbReference type="InterPro" id="IPR000534">
    <property type="entry name" value="Semialdehyde_DH_NAD-bd"/>
</dbReference>
<dbReference type="NCBIfam" id="TIGR01851">
    <property type="entry name" value="argC_other"/>
    <property type="match status" value="1"/>
</dbReference>
<dbReference type="PANTHER" id="PTHR32338:SF10">
    <property type="entry name" value="N-ACETYL-GAMMA-GLUTAMYL-PHOSPHATE REDUCTASE, CHLOROPLASTIC-RELATED"/>
    <property type="match status" value="1"/>
</dbReference>
<dbReference type="PANTHER" id="PTHR32338">
    <property type="entry name" value="N-ACETYL-GAMMA-GLUTAMYL-PHOSPHATE REDUCTASE, CHLOROPLASTIC-RELATED-RELATED"/>
    <property type="match status" value="1"/>
</dbReference>
<dbReference type="Pfam" id="PF01118">
    <property type="entry name" value="Semialdhyde_dh"/>
    <property type="match status" value="1"/>
</dbReference>
<dbReference type="Pfam" id="PF22698">
    <property type="entry name" value="Semialdhyde_dhC_1"/>
    <property type="match status" value="1"/>
</dbReference>
<dbReference type="SMART" id="SM00859">
    <property type="entry name" value="Semialdhyde_dh"/>
    <property type="match status" value="1"/>
</dbReference>
<dbReference type="SUPFAM" id="SSF55347">
    <property type="entry name" value="Glyceraldehyde-3-phosphate dehydrogenase-like, C-terminal domain"/>
    <property type="match status" value="1"/>
</dbReference>
<dbReference type="SUPFAM" id="SSF51735">
    <property type="entry name" value="NAD(P)-binding Rossmann-fold domains"/>
    <property type="match status" value="1"/>
</dbReference>